<gene>
    <name evidence="1" type="primary">bamA</name>
    <name type="synonym">yaeT</name>
    <name type="ordered locus">SNSL254_A0246</name>
</gene>
<proteinExistence type="inferred from homology"/>
<name>BAMA_SALNS</name>
<feature type="signal peptide" evidence="1">
    <location>
        <begin position="1"/>
        <end position="20"/>
    </location>
</feature>
<feature type="chain" id="PRO_1000145784" description="Outer membrane protein assembly factor BamA">
    <location>
        <begin position="21"/>
        <end position="810"/>
    </location>
</feature>
<feature type="domain" description="POTRA 1" evidence="2">
    <location>
        <begin position="24"/>
        <end position="91"/>
    </location>
</feature>
<feature type="domain" description="POTRA 2" evidence="2">
    <location>
        <begin position="92"/>
        <end position="172"/>
    </location>
</feature>
<feature type="domain" description="POTRA 3" evidence="2">
    <location>
        <begin position="175"/>
        <end position="263"/>
    </location>
</feature>
<feature type="domain" description="POTRA 4" evidence="2">
    <location>
        <begin position="266"/>
        <end position="344"/>
    </location>
</feature>
<feature type="domain" description="POTRA 5" evidence="2">
    <location>
        <begin position="347"/>
        <end position="421"/>
    </location>
</feature>
<comment type="function">
    <text evidence="1">Part of the outer membrane protein assembly complex, which is involved in assembly and insertion of beta-barrel proteins into the outer membrane. Constitutes, with BamD, the core component of the assembly machinery.</text>
</comment>
<comment type="subunit">
    <text evidence="1">Part of the Bam complex, which is composed of the outer membrane protein BamA, and four lipoproteins BamB, BamC, BamD and BamE.</text>
</comment>
<comment type="subcellular location">
    <subcellularLocation>
        <location evidence="1">Cell outer membrane</location>
    </subcellularLocation>
</comment>
<comment type="similarity">
    <text evidence="1">Belongs to the BamA family.</text>
</comment>
<evidence type="ECO:0000255" key="1">
    <source>
        <dbReference type="HAMAP-Rule" id="MF_01430"/>
    </source>
</evidence>
<evidence type="ECO:0000255" key="2">
    <source>
        <dbReference type="PROSITE-ProRule" id="PRU01115"/>
    </source>
</evidence>
<keyword id="KW-0998">Cell outer membrane</keyword>
<keyword id="KW-0472">Membrane</keyword>
<keyword id="KW-0677">Repeat</keyword>
<keyword id="KW-0732">Signal</keyword>
<keyword id="KW-0812">Transmembrane</keyword>
<keyword id="KW-1134">Transmembrane beta strand</keyword>
<protein>
    <recommendedName>
        <fullName evidence="1">Outer membrane protein assembly factor BamA</fullName>
    </recommendedName>
</protein>
<dbReference type="EMBL" id="CP001113">
    <property type="protein sequence ID" value="ACF62605.1"/>
    <property type="molecule type" value="Genomic_DNA"/>
</dbReference>
<dbReference type="RefSeq" id="WP_001240931.1">
    <property type="nucleotide sequence ID" value="NZ_CCMR01000003.1"/>
</dbReference>
<dbReference type="SMR" id="B4SV06"/>
<dbReference type="KEGG" id="see:SNSL254_A0246"/>
<dbReference type="HOGENOM" id="CLU_007664_1_0_6"/>
<dbReference type="Proteomes" id="UP000008824">
    <property type="component" value="Chromosome"/>
</dbReference>
<dbReference type="GO" id="GO:1990063">
    <property type="term" value="C:Bam protein complex"/>
    <property type="evidence" value="ECO:0007669"/>
    <property type="project" value="TreeGrafter"/>
</dbReference>
<dbReference type="GO" id="GO:0043165">
    <property type="term" value="P:Gram-negative-bacterium-type cell outer membrane assembly"/>
    <property type="evidence" value="ECO:0007669"/>
    <property type="project" value="UniProtKB-UniRule"/>
</dbReference>
<dbReference type="GO" id="GO:0051205">
    <property type="term" value="P:protein insertion into membrane"/>
    <property type="evidence" value="ECO:0007669"/>
    <property type="project" value="UniProtKB-UniRule"/>
</dbReference>
<dbReference type="FunFam" id="2.40.160.50:FF:000001">
    <property type="entry name" value="Outer membrane protein assembly factor BamA"/>
    <property type="match status" value="1"/>
</dbReference>
<dbReference type="FunFam" id="3.10.20.310:FF:000001">
    <property type="entry name" value="Outer membrane protein assembly factor BamA"/>
    <property type="match status" value="1"/>
</dbReference>
<dbReference type="FunFam" id="3.10.20.310:FF:000002">
    <property type="entry name" value="Outer membrane protein assembly factor BamA"/>
    <property type="match status" value="1"/>
</dbReference>
<dbReference type="FunFam" id="3.10.20.310:FF:000003">
    <property type="entry name" value="Outer membrane protein assembly factor BamA"/>
    <property type="match status" value="1"/>
</dbReference>
<dbReference type="FunFam" id="3.10.20.310:FF:000004">
    <property type="entry name" value="Outer membrane protein assembly factor BamA"/>
    <property type="match status" value="1"/>
</dbReference>
<dbReference type="FunFam" id="3.10.20.310:FF:000005">
    <property type="entry name" value="Outer membrane protein assembly factor BamA"/>
    <property type="match status" value="1"/>
</dbReference>
<dbReference type="Gene3D" id="3.10.20.310">
    <property type="entry name" value="membrane protein fhac"/>
    <property type="match status" value="5"/>
</dbReference>
<dbReference type="Gene3D" id="2.40.160.50">
    <property type="entry name" value="membrane protein fhac: a member of the omp85/tpsb transporter family"/>
    <property type="match status" value="1"/>
</dbReference>
<dbReference type="HAMAP" id="MF_01430">
    <property type="entry name" value="OM_assembly_BamA"/>
    <property type="match status" value="1"/>
</dbReference>
<dbReference type="InterPro" id="IPR000184">
    <property type="entry name" value="Bac_surfAg_D15"/>
</dbReference>
<dbReference type="InterPro" id="IPR010827">
    <property type="entry name" value="BamA/TamA_POTRA"/>
</dbReference>
<dbReference type="InterPro" id="IPR039910">
    <property type="entry name" value="D15-like"/>
</dbReference>
<dbReference type="InterPro" id="IPR023707">
    <property type="entry name" value="OM_assembly_BamA"/>
</dbReference>
<dbReference type="InterPro" id="IPR034746">
    <property type="entry name" value="POTRA"/>
</dbReference>
<dbReference type="NCBIfam" id="TIGR03303">
    <property type="entry name" value="OM_YaeT"/>
    <property type="match status" value="1"/>
</dbReference>
<dbReference type="NCBIfam" id="NF008287">
    <property type="entry name" value="PRK11067.1"/>
    <property type="match status" value="1"/>
</dbReference>
<dbReference type="PANTHER" id="PTHR12815:SF23">
    <property type="entry name" value="OUTER MEMBRANE PROTEIN ASSEMBLY FACTOR BAMA"/>
    <property type="match status" value="1"/>
</dbReference>
<dbReference type="PANTHER" id="PTHR12815">
    <property type="entry name" value="SORTING AND ASSEMBLY MACHINERY SAMM50 PROTEIN FAMILY MEMBER"/>
    <property type="match status" value="1"/>
</dbReference>
<dbReference type="Pfam" id="PF01103">
    <property type="entry name" value="Omp85"/>
    <property type="match status" value="1"/>
</dbReference>
<dbReference type="Pfam" id="PF07244">
    <property type="entry name" value="POTRA"/>
    <property type="match status" value="4"/>
</dbReference>
<dbReference type="PIRSF" id="PIRSF006076">
    <property type="entry name" value="OM_assembly_OMP85"/>
    <property type="match status" value="1"/>
</dbReference>
<dbReference type="PROSITE" id="PS51779">
    <property type="entry name" value="POTRA"/>
    <property type="match status" value="5"/>
</dbReference>
<sequence>MAMKKLLIASLLFSSATVYGAEGFVVKDIHFEGLQRVAVGAALLSMPVRTGDTVNDEDISNTIRALFATGNFEDVRVLRDGNTLLVQVKERPTIASITFSGNKSVKDDMLKQNLEASGVRVGESLDRTTLSDIEKGLEDFYYSVGKYSASVKAVVTPLPRNRVDLKLVFQEGVSAKIQQINIVGNHAFSTEELISHFQLRDEVPWWNVVGDRKYQKQKLAGDLETLRSYYLDRGYARFNIDSTQVSLTPDKKGIYITVNITEGDQYKLSGVQVSGNLAGHSAEIEKLTKIEPGELYNGTKVTKMEDDIKKLLGRYGYAYPRVQSQPEINDADKTVKLRVNVDAGNRFYVRKIRFEGNDTSKDSVLRREMRQMEGAWLGSDLVDQGKERLNRLGFFETVDTDTQRVPGSPDQVDVVYKVKERNTGSFNFGIGYGTESGVSFQAGVQQDNWLGTGYSVGINGTKNDYQTYSELSVTNPYFTVDGVSLGGRIFYNDFQADDADLSDYTNKSYGTDVTLGFPINEYNTLRAGLGYVHNSLSNMEPQVAMWRYLASMGQYPSTNDQDNSFSTDDFTFNYGWTYNKLDRGYFPTEGTRINLTGKVTIPGSDNEYYKATLDTATYVPIDNDHKWVILGRTRFGYGDGLGGKEMPFYENFYAGGSSTVRGFQSNTIGPKAVYYPYNPKNYDADEDYDCATQDGAKDMCKSDDAVGGNAMAVASLEFITPTPFISEKYANSVRTSFFWDMGTVWDTNWDSSQYSGYPDYSDPSNIRMSAGIALQWMSPLGPLVFSYAQPFKKYDGDKAEQFQFNIGKTW</sequence>
<accession>B4SV06</accession>
<reference key="1">
    <citation type="journal article" date="2011" name="J. Bacteriol.">
        <title>Comparative genomics of 28 Salmonella enterica isolates: evidence for CRISPR-mediated adaptive sublineage evolution.</title>
        <authorList>
            <person name="Fricke W.F."/>
            <person name="Mammel M.K."/>
            <person name="McDermott P.F."/>
            <person name="Tartera C."/>
            <person name="White D.G."/>
            <person name="Leclerc J.E."/>
            <person name="Ravel J."/>
            <person name="Cebula T.A."/>
        </authorList>
    </citation>
    <scope>NUCLEOTIDE SEQUENCE [LARGE SCALE GENOMIC DNA]</scope>
    <source>
        <strain>SL254</strain>
    </source>
</reference>
<organism>
    <name type="scientific">Salmonella newport (strain SL254)</name>
    <dbReference type="NCBI Taxonomy" id="423368"/>
    <lineage>
        <taxon>Bacteria</taxon>
        <taxon>Pseudomonadati</taxon>
        <taxon>Pseudomonadota</taxon>
        <taxon>Gammaproteobacteria</taxon>
        <taxon>Enterobacterales</taxon>
        <taxon>Enterobacteriaceae</taxon>
        <taxon>Salmonella</taxon>
    </lineage>
</organism>